<evidence type="ECO:0000255" key="1">
    <source>
        <dbReference type="HAMAP-Rule" id="MF_01366"/>
    </source>
</evidence>
<evidence type="ECO:0000305" key="2"/>
<proteinExistence type="inferred from homology"/>
<dbReference type="EMBL" id="CP000605">
    <property type="protein sequence ID" value="ACD99138.1"/>
    <property type="molecule type" value="Genomic_DNA"/>
</dbReference>
<dbReference type="RefSeq" id="WP_007053026.1">
    <property type="nucleotide sequence ID" value="NZ_AABM02000033.1"/>
</dbReference>
<dbReference type="SMR" id="B3DPZ9"/>
<dbReference type="GeneID" id="69578904"/>
<dbReference type="KEGG" id="blj:BLD_1693"/>
<dbReference type="HOGENOM" id="CLU_082184_2_1_11"/>
<dbReference type="Proteomes" id="UP000002419">
    <property type="component" value="Chromosome"/>
</dbReference>
<dbReference type="GO" id="GO:0022625">
    <property type="term" value="C:cytosolic large ribosomal subunit"/>
    <property type="evidence" value="ECO:0007669"/>
    <property type="project" value="TreeGrafter"/>
</dbReference>
<dbReference type="GO" id="GO:0003729">
    <property type="term" value="F:mRNA binding"/>
    <property type="evidence" value="ECO:0007669"/>
    <property type="project" value="TreeGrafter"/>
</dbReference>
<dbReference type="GO" id="GO:0003735">
    <property type="term" value="F:structural constituent of ribosome"/>
    <property type="evidence" value="ECO:0007669"/>
    <property type="project" value="InterPro"/>
</dbReference>
<dbReference type="GO" id="GO:0017148">
    <property type="term" value="P:negative regulation of translation"/>
    <property type="evidence" value="ECO:0007669"/>
    <property type="project" value="TreeGrafter"/>
</dbReference>
<dbReference type="GO" id="GO:0006412">
    <property type="term" value="P:translation"/>
    <property type="evidence" value="ECO:0007669"/>
    <property type="project" value="UniProtKB-UniRule"/>
</dbReference>
<dbReference type="CDD" id="cd00392">
    <property type="entry name" value="Ribosomal_L13"/>
    <property type="match status" value="1"/>
</dbReference>
<dbReference type="Gene3D" id="3.90.1180.10">
    <property type="entry name" value="Ribosomal protein L13"/>
    <property type="match status" value="1"/>
</dbReference>
<dbReference type="HAMAP" id="MF_01366">
    <property type="entry name" value="Ribosomal_uL13"/>
    <property type="match status" value="1"/>
</dbReference>
<dbReference type="InterPro" id="IPR005822">
    <property type="entry name" value="Ribosomal_uL13"/>
</dbReference>
<dbReference type="InterPro" id="IPR005823">
    <property type="entry name" value="Ribosomal_uL13_bac-type"/>
</dbReference>
<dbReference type="InterPro" id="IPR036899">
    <property type="entry name" value="Ribosomal_uL13_sf"/>
</dbReference>
<dbReference type="NCBIfam" id="TIGR01066">
    <property type="entry name" value="rplM_bact"/>
    <property type="match status" value="1"/>
</dbReference>
<dbReference type="PANTHER" id="PTHR11545:SF2">
    <property type="entry name" value="LARGE RIBOSOMAL SUBUNIT PROTEIN UL13M"/>
    <property type="match status" value="1"/>
</dbReference>
<dbReference type="PANTHER" id="PTHR11545">
    <property type="entry name" value="RIBOSOMAL PROTEIN L13"/>
    <property type="match status" value="1"/>
</dbReference>
<dbReference type="Pfam" id="PF00572">
    <property type="entry name" value="Ribosomal_L13"/>
    <property type="match status" value="1"/>
</dbReference>
<dbReference type="PIRSF" id="PIRSF002181">
    <property type="entry name" value="Ribosomal_L13"/>
    <property type="match status" value="1"/>
</dbReference>
<dbReference type="SUPFAM" id="SSF52161">
    <property type="entry name" value="Ribosomal protein L13"/>
    <property type="match status" value="1"/>
</dbReference>
<protein>
    <recommendedName>
        <fullName evidence="1">Large ribosomal subunit protein uL13</fullName>
    </recommendedName>
    <alternativeName>
        <fullName evidence="2">50S ribosomal protein L13</fullName>
    </alternativeName>
</protein>
<gene>
    <name evidence="1" type="primary">rplM</name>
    <name type="ordered locus">BLD_1693</name>
</gene>
<accession>B3DPZ9</accession>
<comment type="function">
    <text evidence="1">This protein is one of the early assembly proteins of the 50S ribosomal subunit, although it is not seen to bind rRNA by itself. It is important during the early stages of 50S assembly.</text>
</comment>
<comment type="subunit">
    <text evidence="1">Part of the 50S ribosomal subunit.</text>
</comment>
<comment type="similarity">
    <text evidence="1">Belongs to the universal ribosomal protein uL13 family.</text>
</comment>
<keyword id="KW-0687">Ribonucleoprotein</keyword>
<keyword id="KW-0689">Ribosomal protein</keyword>
<organism>
    <name type="scientific">Bifidobacterium longum (strain DJO10A)</name>
    <dbReference type="NCBI Taxonomy" id="205913"/>
    <lineage>
        <taxon>Bacteria</taxon>
        <taxon>Bacillati</taxon>
        <taxon>Actinomycetota</taxon>
        <taxon>Actinomycetes</taxon>
        <taxon>Bifidobacteriales</taxon>
        <taxon>Bifidobacteriaceae</taxon>
        <taxon>Bifidobacterium</taxon>
    </lineage>
</organism>
<feature type="chain" id="PRO_1000144092" description="Large ribosomal subunit protein uL13">
    <location>
        <begin position="1"/>
        <end position="149"/>
    </location>
</feature>
<sequence>MKTFTPKPADLTHDWYVIDATDVVLGRLATQAAILLRGKNKPTYAPHADSGNHVIIINADKIALTGNKMGKELYSHSGRPGGLRRDSYAELLEKNPERIIKNAVKGMLPKNRLAKVQLDRLRIFRGAEHPHTPQKPQVFEIAQVSQQAK</sequence>
<reference key="1">
    <citation type="journal article" date="2008" name="BMC Genomics">
        <title>Comparative genomic analysis of the gut bacterium Bifidobacterium longum reveals loci susceptible to deletion during pure culture growth.</title>
        <authorList>
            <person name="Lee J.H."/>
            <person name="Karamychev V.N."/>
            <person name="Kozyavkin S.A."/>
            <person name="Mills D."/>
            <person name="Pavlov A.R."/>
            <person name="Pavlova N.V."/>
            <person name="Polouchine N.N."/>
            <person name="Richardson P.M."/>
            <person name="Shakhova V.V."/>
            <person name="Slesarev A.I."/>
            <person name="Weimer B."/>
            <person name="O'Sullivan D.J."/>
        </authorList>
    </citation>
    <scope>NUCLEOTIDE SEQUENCE [LARGE SCALE GENOMIC DNA]</scope>
    <source>
        <strain>DJO10A</strain>
    </source>
</reference>
<name>RL13_BIFLD</name>